<accession>C1CPA6</accession>
<proteinExistence type="inferred from homology"/>
<sequence length="60" mass="6399">MAQIKITLTKSPIGRIPSQRKTVVALGLGKLNSSVIKEDNAAIRGMITAVSHLVTVEEVN</sequence>
<keyword id="KW-0687">Ribonucleoprotein</keyword>
<keyword id="KW-0689">Ribosomal protein</keyword>
<dbReference type="EMBL" id="CP000921">
    <property type="protein sequence ID" value="ACO23514.1"/>
    <property type="molecule type" value="Genomic_DNA"/>
</dbReference>
<dbReference type="RefSeq" id="WP_000057241.1">
    <property type="nucleotide sequence ID" value="NC_012469.1"/>
</dbReference>
<dbReference type="SMR" id="C1CPA6"/>
<dbReference type="GeneID" id="93738975"/>
<dbReference type="KEGG" id="snt:SPT_0274"/>
<dbReference type="HOGENOM" id="CLU_131047_2_1_9"/>
<dbReference type="GO" id="GO:0022625">
    <property type="term" value="C:cytosolic large ribosomal subunit"/>
    <property type="evidence" value="ECO:0007669"/>
    <property type="project" value="TreeGrafter"/>
</dbReference>
<dbReference type="GO" id="GO:0003735">
    <property type="term" value="F:structural constituent of ribosome"/>
    <property type="evidence" value="ECO:0007669"/>
    <property type="project" value="InterPro"/>
</dbReference>
<dbReference type="GO" id="GO:0006412">
    <property type="term" value="P:translation"/>
    <property type="evidence" value="ECO:0007669"/>
    <property type="project" value="UniProtKB-UniRule"/>
</dbReference>
<dbReference type="CDD" id="cd01658">
    <property type="entry name" value="Ribosomal_L30"/>
    <property type="match status" value="1"/>
</dbReference>
<dbReference type="FunFam" id="3.30.1390.20:FF:000001">
    <property type="entry name" value="50S ribosomal protein L30"/>
    <property type="match status" value="1"/>
</dbReference>
<dbReference type="Gene3D" id="3.30.1390.20">
    <property type="entry name" value="Ribosomal protein L30, ferredoxin-like fold domain"/>
    <property type="match status" value="1"/>
</dbReference>
<dbReference type="HAMAP" id="MF_01371_B">
    <property type="entry name" value="Ribosomal_uL30_B"/>
    <property type="match status" value="1"/>
</dbReference>
<dbReference type="InterPro" id="IPR036919">
    <property type="entry name" value="Ribo_uL30_ferredoxin-like_sf"/>
</dbReference>
<dbReference type="InterPro" id="IPR005996">
    <property type="entry name" value="Ribosomal_uL30_bac-type"/>
</dbReference>
<dbReference type="InterPro" id="IPR018038">
    <property type="entry name" value="Ribosomal_uL30_CS"/>
</dbReference>
<dbReference type="InterPro" id="IPR016082">
    <property type="entry name" value="Ribosomal_uL30_ferredoxin-like"/>
</dbReference>
<dbReference type="NCBIfam" id="TIGR01308">
    <property type="entry name" value="rpmD_bact"/>
    <property type="match status" value="1"/>
</dbReference>
<dbReference type="PANTHER" id="PTHR15892:SF2">
    <property type="entry name" value="LARGE RIBOSOMAL SUBUNIT PROTEIN UL30M"/>
    <property type="match status" value="1"/>
</dbReference>
<dbReference type="PANTHER" id="PTHR15892">
    <property type="entry name" value="MITOCHONDRIAL RIBOSOMAL PROTEIN L30"/>
    <property type="match status" value="1"/>
</dbReference>
<dbReference type="Pfam" id="PF00327">
    <property type="entry name" value="Ribosomal_L30"/>
    <property type="match status" value="1"/>
</dbReference>
<dbReference type="PIRSF" id="PIRSF002211">
    <property type="entry name" value="Ribosomal_L30_bac-type"/>
    <property type="match status" value="1"/>
</dbReference>
<dbReference type="SUPFAM" id="SSF55129">
    <property type="entry name" value="Ribosomal protein L30p/L7e"/>
    <property type="match status" value="1"/>
</dbReference>
<dbReference type="PROSITE" id="PS00634">
    <property type="entry name" value="RIBOSOMAL_L30"/>
    <property type="match status" value="1"/>
</dbReference>
<organism>
    <name type="scientific">Streptococcus pneumoniae (strain Taiwan19F-14)</name>
    <dbReference type="NCBI Taxonomy" id="487213"/>
    <lineage>
        <taxon>Bacteria</taxon>
        <taxon>Bacillati</taxon>
        <taxon>Bacillota</taxon>
        <taxon>Bacilli</taxon>
        <taxon>Lactobacillales</taxon>
        <taxon>Streptococcaceae</taxon>
        <taxon>Streptococcus</taxon>
    </lineage>
</organism>
<feature type="chain" id="PRO_1000184166" description="Large ribosomal subunit protein uL30">
    <location>
        <begin position="1"/>
        <end position="60"/>
    </location>
</feature>
<evidence type="ECO:0000255" key="1">
    <source>
        <dbReference type="HAMAP-Rule" id="MF_01371"/>
    </source>
</evidence>
<evidence type="ECO:0000305" key="2"/>
<gene>
    <name evidence="1" type="primary">rpmD</name>
    <name type="ordered locus">SPT_0274</name>
</gene>
<comment type="subunit">
    <text evidence="1">Part of the 50S ribosomal subunit.</text>
</comment>
<comment type="similarity">
    <text evidence="1">Belongs to the universal ribosomal protein uL30 family.</text>
</comment>
<name>RL30_STRZT</name>
<protein>
    <recommendedName>
        <fullName evidence="1">Large ribosomal subunit protein uL30</fullName>
    </recommendedName>
    <alternativeName>
        <fullName evidence="2">50S ribosomal protein L30</fullName>
    </alternativeName>
</protein>
<reference key="1">
    <citation type="journal article" date="2010" name="Genome Biol.">
        <title>Structure and dynamics of the pan-genome of Streptococcus pneumoniae and closely related species.</title>
        <authorList>
            <person name="Donati C."/>
            <person name="Hiller N.L."/>
            <person name="Tettelin H."/>
            <person name="Muzzi A."/>
            <person name="Croucher N.J."/>
            <person name="Angiuoli S.V."/>
            <person name="Oggioni M."/>
            <person name="Dunning Hotopp J.C."/>
            <person name="Hu F.Z."/>
            <person name="Riley D.R."/>
            <person name="Covacci A."/>
            <person name="Mitchell T.J."/>
            <person name="Bentley S.D."/>
            <person name="Kilian M."/>
            <person name="Ehrlich G.D."/>
            <person name="Rappuoli R."/>
            <person name="Moxon E.R."/>
            <person name="Masignani V."/>
        </authorList>
    </citation>
    <scope>NUCLEOTIDE SEQUENCE [LARGE SCALE GENOMIC DNA]</scope>
    <source>
        <strain>Taiwan19F-14</strain>
    </source>
</reference>